<name>P3H2_RAT</name>
<evidence type="ECO:0000250" key="1"/>
<evidence type="ECO:0000250" key="2">
    <source>
        <dbReference type="UniProtKB" id="Q8CG71"/>
    </source>
</evidence>
<evidence type="ECO:0000250" key="3">
    <source>
        <dbReference type="UniProtKB" id="Q8IVL5"/>
    </source>
</evidence>
<evidence type="ECO:0000255" key="4"/>
<evidence type="ECO:0000255" key="5">
    <source>
        <dbReference type="PROSITE-ProRule" id="PRU00805"/>
    </source>
</evidence>
<evidence type="ECO:0000255" key="6">
    <source>
        <dbReference type="PROSITE-ProRule" id="PRU10138"/>
    </source>
</evidence>
<evidence type="ECO:0000256" key="7">
    <source>
        <dbReference type="SAM" id="MobiDB-lite"/>
    </source>
</evidence>
<evidence type="ECO:0000269" key="8">
    <source>
    </source>
</evidence>
<evidence type="ECO:0000305" key="9"/>
<evidence type="ECO:0000305" key="10">
    <source>
    </source>
</evidence>
<evidence type="ECO:0000312" key="11">
    <source>
        <dbReference type="RGD" id="1304568"/>
    </source>
</evidence>
<protein>
    <recommendedName>
        <fullName evidence="11">Prolyl 3-hydroxylase 2</fullName>
        <ecNumber evidence="10">1.14.11.7</ecNumber>
    </recommendedName>
    <alternativeName>
        <fullName evidence="3">Leprecan-like protein 1</fullName>
    </alternativeName>
</protein>
<keyword id="KW-0223">Dioxygenase</keyword>
<keyword id="KW-0256">Endoplasmic reticulum</keyword>
<keyword id="KW-0325">Glycoprotein</keyword>
<keyword id="KW-0333">Golgi apparatus</keyword>
<keyword id="KW-0408">Iron</keyword>
<keyword id="KW-0479">Metal-binding</keyword>
<keyword id="KW-0560">Oxidoreductase</keyword>
<keyword id="KW-1185">Reference proteome</keyword>
<keyword id="KW-0677">Repeat</keyword>
<keyword id="KW-0703">Sarcoplasmic reticulum</keyword>
<keyword id="KW-0732">Signal</keyword>
<keyword id="KW-0802">TPR repeat</keyword>
<keyword id="KW-0847">Vitamin C</keyword>
<feature type="signal peptide" evidence="4">
    <location>
        <begin position="1"/>
        <end position="21"/>
    </location>
</feature>
<feature type="chain" id="PRO_0000240358" description="Prolyl 3-hydroxylase 2">
    <location>
        <begin position="22"/>
        <end position="703"/>
    </location>
</feature>
<feature type="repeat" description="TPR 1">
    <location>
        <begin position="42"/>
        <end position="75"/>
    </location>
</feature>
<feature type="repeat" description="TPR 2">
    <location>
        <begin position="144"/>
        <end position="177"/>
    </location>
</feature>
<feature type="repeat" description="TPR 3">
    <location>
        <begin position="205"/>
        <end position="238"/>
    </location>
</feature>
<feature type="repeat" description="TPR 4">
    <location>
        <begin position="301"/>
        <end position="334"/>
    </location>
</feature>
<feature type="domain" description="Fe2OG dioxygenase" evidence="5">
    <location>
        <begin position="552"/>
        <end position="666"/>
    </location>
</feature>
<feature type="region of interest" description="Disordered" evidence="7">
    <location>
        <begin position="18"/>
        <end position="40"/>
    </location>
</feature>
<feature type="short sequence motif" description="Prevents secretion from ER" evidence="6">
    <location>
        <begin position="700"/>
        <end position="703"/>
    </location>
</feature>
<feature type="active site" evidence="1">
    <location>
        <position position="657"/>
    </location>
</feature>
<feature type="binding site">
    <location>
        <position position="575"/>
    </location>
    <ligand>
        <name>Fe cation</name>
        <dbReference type="ChEBI" id="CHEBI:24875"/>
    </ligand>
</feature>
<feature type="binding site">
    <location>
        <position position="577"/>
    </location>
    <ligand>
        <name>Fe cation</name>
        <dbReference type="ChEBI" id="CHEBI:24875"/>
    </ligand>
</feature>
<feature type="binding site">
    <location>
        <position position="647"/>
    </location>
    <ligand>
        <name>Fe cation</name>
        <dbReference type="ChEBI" id="CHEBI:24875"/>
    </ligand>
</feature>
<feature type="glycosylation site" description="N-linked (GlcNAc...) asparagine" evidence="4">
    <location>
        <position position="444"/>
    </location>
</feature>
<feature type="glycosylation site" description="N-linked (GlcNAc...) asparagine" evidence="4">
    <location>
        <position position="455"/>
    </location>
</feature>
<feature type="glycosylation site" description="N-linked (GlcNAc...) asparagine" evidence="4">
    <location>
        <position position="544"/>
    </location>
</feature>
<reference key="1">
    <citation type="journal article" date="2004" name="Genome Res.">
        <title>The status, quality, and expansion of the NIH full-length cDNA project: the Mammalian Gene Collection (MGC).</title>
        <authorList>
            <consortium name="The MGC Project Team"/>
        </authorList>
    </citation>
    <scope>NUCLEOTIDE SEQUENCE [LARGE SCALE MRNA]</scope>
    <source>
        <tissue>Placenta</tissue>
    </source>
</reference>
<reference key="2">
    <citation type="journal article" date="2011" name="J. Biol. Chem.">
        <title>A role for prolyl 3-hydroxylase 2 in post-translational modification of fibril-forming collagens.</title>
        <authorList>
            <person name="Fernandes R.J."/>
            <person name="Farnand A.W."/>
            <person name="Traeger G.R."/>
            <person name="Weis M.A."/>
            <person name="Eyre D.R."/>
        </authorList>
    </citation>
    <scope>FUNCTION AS PROLYL-3-HYDROXYLASE</scope>
    <scope>CATALYTIC ACTIVITY</scope>
    <scope>TISSUE SPECIFICITY</scope>
</reference>
<dbReference type="EC" id="1.14.11.7" evidence="10"/>
<dbReference type="EMBL" id="BC099107">
    <property type="protein sequence ID" value="AAH99107.1"/>
    <property type="molecule type" value="mRNA"/>
</dbReference>
<dbReference type="RefSeq" id="NP_001020798.1">
    <property type="nucleotide sequence ID" value="NM_001025627.1"/>
</dbReference>
<dbReference type="SMR" id="Q4KLM6"/>
<dbReference type="FunCoup" id="Q4KLM6">
    <property type="interactions" value="153"/>
</dbReference>
<dbReference type="STRING" id="10116.ENSRNOP00000074673"/>
<dbReference type="GlyCosmos" id="Q4KLM6">
    <property type="glycosylation" value="3 sites, No reported glycans"/>
</dbReference>
<dbReference type="GlyGen" id="Q4KLM6">
    <property type="glycosylation" value="4 sites"/>
</dbReference>
<dbReference type="iPTMnet" id="Q4KLM6"/>
<dbReference type="PhosphoSitePlus" id="Q4KLM6"/>
<dbReference type="PaxDb" id="10116-ENSRNOP00000002639"/>
<dbReference type="Ensembl" id="ENSRNOT00000089540.2">
    <property type="protein sequence ID" value="ENSRNOP00000074673.2"/>
    <property type="gene ID" value="ENSRNOG00000055751.2"/>
</dbReference>
<dbReference type="GeneID" id="288016"/>
<dbReference type="KEGG" id="rno:288016"/>
<dbReference type="UCSC" id="RGD:1304568">
    <property type="organism name" value="rat"/>
</dbReference>
<dbReference type="AGR" id="RGD:1304568"/>
<dbReference type="CTD" id="55214"/>
<dbReference type="RGD" id="1304568">
    <property type="gene designation" value="P3h2"/>
</dbReference>
<dbReference type="eggNOG" id="KOG4459">
    <property type="taxonomic scope" value="Eukaryota"/>
</dbReference>
<dbReference type="GeneTree" id="ENSGT00940000159593"/>
<dbReference type="InParanoid" id="Q4KLM6"/>
<dbReference type="OMA" id="PDDADMW"/>
<dbReference type="OrthoDB" id="8517835at2759"/>
<dbReference type="PhylomeDB" id="Q4KLM6"/>
<dbReference type="Reactome" id="R-RNO-1650814">
    <property type="pathway name" value="Collagen biosynthesis and modifying enzymes"/>
</dbReference>
<dbReference type="PRO" id="PR:Q4KLM6"/>
<dbReference type="Proteomes" id="UP000002494">
    <property type="component" value="Chromosome 11"/>
</dbReference>
<dbReference type="GO" id="GO:0005604">
    <property type="term" value="C:basement membrane"/>
    <property type="evidence" value="ECO:0000250"/>
    <property type="project" value="UniProtKB"/>
</dbReference>
<dbReference type="GO" id="GO:0005829">
    <property type="term" value="C:cytosol"/>
    <property type="evidence" value="ECO:0007669"/>
    <property type="project" value="Ensembl"/>
</dbReference>
<dbReference type="GO" id="GO:0005783">
    <property type="term" value="C:endoplasmic reticulum"/>
    <property type="evidence" value="ECO:0000250"/>
    <property type="project" value="UniProtKB"/>
</dbReference>
<dbReference type="GO" id="GO:0005794">
    <property type="term" value="C:Golgi apparatus"/>
    <property type="evidence" value="ECO:0000250"/>
    <property type="project" value="UniProtKB"/>
</dbReference>
<dbReference type="GO" id="GO:0005654">
    <property type="term" value="C:nucleoplasm"/>
    <property type="evidence" value="ECO:0007669"/>
    <property type="project" value="Ensembl"/>
</dbReference>
<dbReference type="GO" id="GO:0016529">
    <property type="term" value="C:sarcoplasmic reticulum"/>
    <property type="evidence" value="ECO:0007669"/>
    <property type="project" value="UniProtKB-SubCell"/>
</dbReference>
<dbReference type="GO" id="GO:0005506">
    <property type="term" value="F:iron ion binding"/>
    <property type="evidence" value="ECO:0007669"/>
    <property type="project" value="InterPro"/>
</dbReference>
<dbReference type="GO" id="GO:0031418">
    <property type="term" value="F:L-ascorbic acid binding"/>
    <property type="evidence" value="ECO:0007669"/>
    <property type="project" value="UniProtKB-KW"/>
</dbReference>
<dbReference type="GO" id="GO:0019797">
    <property type="term" value="F:procollagen-proline 3-dioxygenase activity"/>
    <property type="evidence" value="ECO:0000314"/>
    <property type="project" value="UniProtKB"/>
</dbReference>
<dbReference type="GO" id="GO:0032963">
    <property type="term" value="P:collagen metabolic process"/>
    <property type="evidence" value="ECO:0000314"/>
    <property type="project" value="UniProtKB"/>
</dbReference>
<dbReference type="GO" id="GO:0008285">
    <property type="term" value="P:negative regulation of cell population proliferation"/>
    <property type="evidence" value="ECO:0000250"/>
    <property type="project" value="UniProtKB"/>
</dbReference>
<dbReference type="GO" id="GO:0019511">
    <property type="term" value="P:peptidyl-proline hydroxylation"/>
    <property type="evidence" value="ECO:0000314"/>
    <property type="project" value="UniProtKB"/>
</dbReference>
<dbReference type="FunFam" id="2.60.120.620:FF:000003">
    <property type="entry name" value="Prolyl 3-hydroxylase 2"/>
    <property type="match status" value="1"/>
</dbReference>
<dbReference type="Gene3D" id="2.60.120.620">
    <property type="entry name" value="q2cbj1_9rhob like domain"/>
    <property type="match status" value="1"/>
</dbReference>
<dbReference type="Gene3D" id="1.25.40.10">
    <property type="entry name" value="Tetratricopeptide repeat domain"/>
    <property type="match status" value="2"/>
</dbReference>
<dbReference type="InterPro" id="IPR056585">
    <property type="entry name" value="Leprecan_dom"/>
</dbReference>
<dbReference type="InterPro" id="IPR005123">
    <property type="entry name" value="Oxoglu/Fe-dep_dioxygenase_dom"/>
</dbReference>
<dbReference type="InterPro" id="IPR039575">
    <property type="entry name" value="P3H"/>
</dbReference>
<dbReference type="InterPro" id="IPR006620">
    <property type="entry name" value="Pro_4_hyd_alph"/>
</dbReference>
<dbReference type="InterPro" id="IPR044862">
    <property type="entry name" value="Pro_4_hyd_alph_FE2OG_OXY"/>
</dbReference>
<dbReference type="InterPro" id="IPR011990">
    <property type="entry name" value="TPR-like_helical_dom_sf"/>
</dbReference>
<dbReference type="PANTHER" id="PTHR14049">
    <property type="entry name" value="LEPRECAN 1"/>
    <property type="match status" value="1"/>
</dbReference>
<dbReference type="PANTHER" id="PTHR14049:SF1">
    <property type="entry name" value="PROLYL 3-HYDROXYLASE 2"/>
    <property type="match status" value="1"/>
</dbReference>
<dbReference type="Pfam" id="PF13640">
    <property type="entry name" value="2OG-FeII_Oxy_3"/>
    <property type="match status" value="1"/>
</dbReference>
<dbReference type="Pfam" id="PF23557">
    <property type="entry name" value="TPR_leprecan"/>
    <property type="match status" value="1"/>
</dbReference>
<dbReference type="SMART" id="SM00702">
    <property type="entry name" value="P4Hc"/>
    <property type="match status" value="1"/>
</dbReference>
<dbReference type="SUPFAM" id="SSF48452">
    <property type="entry name" value="TPR-like"/>
    <property type="match status" value="1"/>
</dbReference>
<dbReference type="PROSITE" id="PS00014">
    <property type="entry name" value="ER_TARGET"/>
    <property type="match status" value="1"/>
</dbReference>
<dbReference type="PROSITE" id="PS51471">
    <property type="entry name" value="FE2OG_OXY"/>
    <property type="match status" value="1"/>
</dbReference>
<organism>
    <name type="scientific">Rattus norvegicus</name>
    <name type="common">Rat</name>
    <dbReference type="NCBI Taxonomy" id="10116"/>
    <lineage>
        <taxon>Eukaryota</taxon>
        <taxon>Metazoa</taxon>
        <taxon>Chordata</taxon>
        <taxon>Craniata</taxon>
        <taxon>Vertebrata</taxon>
        <taxon>Euteleostomi</taxon>
        <taxon>Mammalia</taxon>
        <taxon>Eutheria</taxon>
        <taxon>Euarchontoglires</taxon>
        <taxon>Glires</taxon>
        <taxon>Rodentia</taxon>
        <taxon>Myomorpha</taxon>
        <taxon>Muroidea</taxon>
        <taxon>Muridae</taxon>
        <taxon>Murinae</taxon>
        <taxon>Rattus</taxon>
    </lineage>
</organism>
<accession>Q4KLM6</accession>
<sequence>MRESTWVSLLLLLLLPAPQRGGPQDGRGSPEPEPERGPLQPFDLLYASGVAAYYSGDYEGAVRDLEAALRSHRRLRDIRTRCARHCAARRPLAPPGAGPGAELPFFRAVLERARCSRSCQSQRLGGPASRHRVSEDVRSDFQRRVPYNYLQRAYIKLNQLDKAMEAAHTFFMANPEHMEMQQNIEDYKATARVEAPLVDREAKPHLESYNAGVKHYEADDFEAAIKYFEQALREYFNEDMVCRALCEGPQRFEEYEYLGSKGSLYEAIADHYMQVLVCQHECVRELATRPGRLSPIENFLPLHYDYLQFAYYRVGEYVKALECAKAYLMFHPDDQDVLDNVDFYESLLDDSTDPASIEAREDLTAFVKRHKLEAELIKSAAEGLGFSYSEPNYWISYGGRQDENRVPSGVNMDGAEVHGLSMGKKSPPKIGRDLREGGPLLYENITFVYNSEQLNGTQRVLLDNVLSEEQCRELHSVASGIMLVGDGYRGKTSPHTPNEKFEGATVLKALKFGYEGRVPLKSARLFYDISEKARKIVESYFMLNSTLYFSYTHMVCRTALSGQQDRRNDLSHPIHADNCLLDPEANECWKEPPAYTFRDYSALLYMNDDFEGGEFIFTEMDAKTVTASIKPKCGRMISFSSGGENPHGVKAVTRGQRCAVALWFTLDPLYRELERIQADEVIAILDQEQHGKHGLNINPKDEL</sequence>
<proteinExistence type="evidence at protein level"/>
<gene>
    <name evidence="11" type="primary">P3h2</name>
    <name evidence="3" type="synonym">Leprel1</name>
</gene>
<comment type="function">
    <text evidence="2 3 10">Prolyl 3-hydroxylase that catalyzes the post-translational formation of 3-hydroxyproline on collagens (PubMed:21757687). Contributes to proline 3-hydroxylation of collagen COL4A1 and COL1A1 in tendons, the eye sclera and in the eye lens capsule (By similarity). Has high activity with the type IV collagen COL4A1, and lower activity with COL1A1. Catalyzes hydroxylation of the first Pro in Gly-Pro-Hyp sequences where Hyp is 4-hydroxyproline. Has no activity on substrates that lack 4-hydroxyproline in the third position (By similarity).</text>
</comment>
<comment type="catalytic activity">
    <reaction evidence="10">
        <text>L-prolyl-[collagen] + 2-oxoglutarate + O2 = trans-3-hydroxy-L-prolyl-[collagen] + succinate + CO2</text>
        <dbReference type="Rhea" id="RHEA:22872"/>
        <dbReference type="Rhea" id="RHEA-COMP:11676"/>
        <dbReference type="Rhea" id="RHEA-COMP:11678"/>
        <dbReference type="ChEBI" id="CHEBI:15379"/>
        <dbReference type="ChEBI" id="CHEBI:16526"/>
        <dbReference type="ChEBI" id="CHEBI:16810"/>
        <dbReference type="ChEBI" id="CHEBI:30031"/>
        <dbReference type="ChEBI" id="CHEBI:50342"/>
        <dbReference type="ChEBI" id="CHEBI:85428"/>
        <dbReference type="EC" id="1.14.11.7"/>
    </reaction>
</comment>
<comment type="cofactor">
    <cofactor evidence="3">
        <name>Fe cation</name>
        <dbReference type="ChEBI" id="CHEBI:24875"/>
    </cofactor>
</comment>
<comment type="cofactor">
    <cofactor evidence="3">
        <name>L-ascorbate</name>
        <dbReference type="ChEBI" id="CHEBI:38290"/>
    </cofactor>
</comment>
<comment type="subcellular location">
    <subcellularLocation>
        <location evidence="3 6">Endoplasmic reticulum</location>
    </subcellularLocation>
    <subcellularLocation>
        <location evidence="3">Sarcoplasmic reticulum</location>
    </subcellularLocation>
    <subcellularLocation>
        <location evidence="3">Golgi apparatus</location>
    </subcellularLocation>
</comment>
<comment type="tissue specificity">
    <text evidence="8">Detected at low levels in cartilage.</text>
</comment>
<comment type="similarity">
    <text evidence="9">Belongs to the leprecan family.</text>
</comment>